<name>MET8_YEAST</name>
<feature type="chain" id="PRO_0000096446" description="Siroheme biosynthesis protein MET8">
    <location>
        <begin position="1"/>
        <end position="274"/>
    </location>
</feature>
<feature type="active site" description="Proton acceptor" evidence="1">
    <location>
        <position position="141"/>
    </location>
</feature>
<feature type="binding site" evidence="3">
    <location>
        <begin position="23"/>
        <end position="24"/>
    </location>
    <ligand>
        <name>NAD(+)</name>
        <dbReference type="ChEBI" id="CHEBI:57540"/>
    </ligand>
</feature>
<feature type="binding site" evidence="3">
    <location>
        <begin position="43"/>
        <end position="45"/>
    </location>
    <ligand>
        <name>NAD(+)</name>
        <dbReference type="ChEBI" id="CHEBI:57540"/>
    </ligand>
</feature>
<feature type="binding site" evidence="3">
    <location>
        <position position="93"/>
    </location>
    <ligand>
        <name>NAD(+)</name>
        <dbReference type="ChEBI" id="CHEBI:57540"/>
    </ligand>
</feature>
<feature type="mutagenesis site" description="Loss of dehydrogenase activity. No effect on chelatase activity." evidence="3">
    <original>G</original>
    <variation>D</variation>
    <location>
        <position position="22"/>
    </location>
</feature>
<feature type="mutagenesis site" description="Loss of chelatase and dehydrogenase activity." evidence="3">
    <original>D</original>
    <variation>A</variation>
    <location>
        <position position="141"/>
    </location>
</feature>
<feature type="mutagenesis site" description="No effect on dehydrogenase or chelatase activity." evidence="3">
    <original>H</original>
    <variation>A</variation>
    <location>
        <position position="237"/>
    </location>
</feature>
<feature type="sequence conflict" description="In Ref. 5." evidence="7" ref="5">
    <original>K</original>
    <variation>R</variation>
    <location>
        <position position="15"/>
    </location>
</feature>
<feature type="sequence conflict" description="In Ref. 5." evidence="7" ref="5">
    <original>I</original>
    <variation>M</variation>
    <location>
        <position position="33"/>
    </location>
</feature>
<feature type="sequence conflict" description="In Ref. 5." evidence="7" ref="5">
    <original>E</original>
    <variation>K</variation>
    <location>
        <position position="61"/>
    </location>
</feature>
<feature type="sequence conflict" description="In Ref. 5." evidence="7" ref="5">
    <original>D</original>
    <variation>N</variation>
    <location>
        <position position="102"/>
    </location>
</feature>
<feature type="strand" evidence="8">
    <location>
        <begin position="5"/>
        <end position="9"/>
    </location>
</feature>
<feature type="strand" evidence="8">
    <location>
        <begin position="15"/>
        <end position="22"/>
    </location>
</feature>
<feature type="helix" evidence="8">
    <location>
        <begin position="23"/>
        <end position="32"/>
    </location>
</feature>
<feature type="helix" evidence="8">
    <location>
        <begin position="33"/>
        <end position="35"/>
    </location>
</feature>
<feature type="strand" evidence="8">
    <location>
        <begin position="38"/>
        <end position="46"/>
    </location>
</feature>
<feature type="helix" evidence="8">
    <location>
        <begin position="50"/>
        <end position="54"/>
    </location>
</feature>
<feature type="helix" evidence="8">
    <location>
        <begin position="56"/>
        <end position="58"/>
    </location>
</feature>
<feature type="turn" evidence="8">
    <location>
        <begin position="68"/>
        <end position="70"/>
    </location>
</feature>
<feature type="strand" evidence="8">
    <location>
        <begin position="72"/>
        <end position="74"/>
    </location>
</feature>
<feature type="strand" evidence="8">
    <location>
        <begin position="86"/>
        <end position="89"/>
    </location>
</feature>
<feature type="helix" evidence="8">
    <location>
        <begin position="95"/>
        <end position="98"/>
    </location>
</feature>
<feature type="strand" evidence="8">
    <location>
        <begin position="107"/>
        <end position="112"/>
    </location>
</feature>
<feature type="helix" evidence="8">
    <location>
        <begin position="117"/>
        <end position="131"/>
    </location>
</feature>
<feature type="strand" evidence="8">
    <location>
        <begin position="135"/>
        <end position="139"/>
    </location>
</feature>
<feature type="helix" evidence="8">
    <location>
        <begin position="143"/>
        <end position="145"/>
    </location>
</feature>
<feature type="strand" evidence="8">
    <location>
        <begin position="146"/>
        <end position="149"/>
    </location>
</feature>
<feature type="strand" evidence="8">
    <location>
        <begin position="152"/>
        <end position="156"/>
    </location>
</feature>
<feature type="turn" evidence="8">
    <location>
        <begin position="157"/>
        <end position="159"/>
    </location>
</feature>
<feature type="strand" evidence="8">
    <location>
        <begin position="160"/>
        <end position="169"/>
    </location>
</feature>
<feature type="helix" evidence="8">
    <location>
        <begin position="171"/>
        <end position="188"/>
    </location>
</feature>
<feature type="helix" evidence="8">
    <location>
        <begin position="193"/>
        <end position="210"/>
    </location>
</feature>
<feature type="helix" evidence="8">
    <location>
        <begin position="214"/>
        <end position="216"/>
    </location>
</feature>
<feature type="helix" evidence="8">
    <location>
        <begin position="217"/>
        <end position="235"/>
    </location>
</feature>
<feature type="helix" evidence="8">
    <location>
        <begin position="236"/>
        <end position="238"/>
    </location>
</feature>
<feature type="helix" evidence="8">
    <location>
        <begin position="241"/>
        <end position="252"/>
    </location>
</feature>
<feature type="turn" evidence="8">
    <location>
        <begin position="253"/>
        <end position="256"/>
    </location>
</feature>
<feature type="helix" evidence="8">
    <location>
        <begin position="264"/>
        <end position="270"/>
    </location>
</feature>
<evidence type="ECO:0000255" key="1"/>
<evidence type="ECO:0000269" key="2">
    <source>
    </source>
</evidence>
<evidence type="ECO:0000269" key="3">
    <source>
    </source>
</evidence>
<evidence type="ECO:0000303" key="4">
    <source>
    </source>
</evidence>
<evidence type="ECO:0000303" key="5">
    <source>
    </source>
</evidence>
<evidence type="ECO:0000303" key="6">
    <source>
    </source>
</evidence>
<evidence type="ECO:0000305" key="7"/>
<evidence type="ECO:0007829" key="8">
    <source>
        <dbReference type="PDB" id="1KYQ"/>
    </source>
</evidence>
<protein>
    <recommendedName>
        <fullName evidence="4">Siroheme biosynthesis protein MET8</fullName>
    </recommendedName>
    <domain>
        <recommendedName>
            <fullName evidence="5">Precorrin-2 dehydrogenase</fullName>
            <ecNumber evidence="3">1.3.1.76</ecNumber>
        </recommendedName>
    </domain>
    <domain>
        <recommendedName>
            <fullName evidence="5">Sirohydrochlorin ferrochelatase</fullName>
            <ecNumber evidence="3">4.99.1.4</ecNumber>
        </recommendedName>
    </domain>
</protein>
<proteinExistence type="evidence at protein level"/>
<organism>
    <name type="scientific">Saccharomyces cerevisiae (strain ATCC 204508 / S288c)</name>
    <name type="common">Baker's yeast</name>
    <dbReference type="NCBI Taxonomy" id="559292"/>
    <lineage>
        <taxon>Eukaryota</taxon>
        <taxon>Fungi</taxon>
        <taxon>Dikarya</taxon>
        <taxon>Ascomycota</taxon>
        <taxon>Saccharomycotina</taxon>
        <taxon>Saccharomycetes</taxon>
        <taxon>Saccharomycetales</taxon>
        <taxon>Saccharomycetaceae</taxon>
        <taxon>Saccharomyces</taxon>
    </lineage>
</organism>
<reference key="1">
    <citation type="journal article" date="1990" name="Nucleic Acids Res.">
        <title>Nucleotide sequence of the MET8 gene of Saccharomyces cerevisiae.</title>
        <authorList>
            <person name="Cherest H."/>
            <person name="Thomas D."/>
            <person name="Surdin-Kerjan Y."/>
        </authorList>
    </citation>
    <scope>NUCLEOTIDE SEQUENCE [GENOMIC DNA]</scope>
    <source>
        <strain>ATCC 26786 / X2180-1A</strain>
    </source>
</reference>
<reference key="2">
    <citation type="journal article" date="1994" name="EMBO J.">
        <title>Complete DNA sequence of yeast chromosome II.</title>
        <authorList>
            <person name="Feldmann H."/>
            <person name="Aigle M."/>
            <person name="Aljinovic G."/>
            <person name="Andre B."/>
            <person name="Baclet M.C."/>
            <person name="Barthe C."/>
            <person name="Baur A."/>
            <person name="Becam A.-M."/>
            <person name="Biteau N."/>
            <person name="Boles E."/>
            <person name="Brandt T."/>
            <person name="Brendel M."/>
            <person name="Brueckner M."/>
            <person name="Bussereau F."/>
            <person name="Christiansen C."/>
            <person name="Contreras R."/>
            <person name="Crouzet M."/>
            <person name="Cziepluch C."/>
            <person name="Demolis N."/>
            <person name="Delaveau T."/>
            <person name="Doignon F."/>
            <person name="Domdey H."/>
            <person name="Duesterhus S."/>
            <person name="Dubois E."/>
            <person name="Dujon B."/>
            <person name="El Bakkoury M."/>
            <person name="Entian K.-D."/>
            <person name="Feuermann M."/>
            <person name="Fiers W."/>
            <person name="Fobo G.M."/>
            <person name="Fritz C."/>
            <person name="Gassenhuber J."/>
            <person name="Glansdorff N."/>
            <person name="Goffeau A."/>
            <person name="Grivell L.A."/>
            <person name="de Haan M."/>
            <person name="Hein C."/>
            <person name="Herbert C.J."/>
            <person name="Hollenberg C.P."/>
            <person name="Holmstroem K."/>
            <person name="Jacq C."/>
            <person name="Jacquet M."/>
            <person name="Jauniaux J.-C."/>
            <person name="Jonniaux J.-L."/>
            <person name="Kallesoee T."/>
            <person name="Kiesau P."/>
            <person name="Kirchrath L."/>
            <person name="Koetter P."/>
            <person name="Korol S."/>
            <person name="Liebl S."/>
            <person name="Logghe M."/>
            <person name="Lohan A.J.E."/>
            <person name="Louis E.J."/>
            <person name="Li Z.Y."/>
            <person name="Maat M.J."/>
            <person name="Mallet L."/>
            <person name="Mannhaupt G."/>
            <person name="Messenguy F."/>
            <person name="Miosga T."/>
            <person name="Molemans F."/>
            <person name="Mueller S."/>
            <person name="Nasr F."/>
            <person name="Obermaier B."/>
            <person name="Perea J."/>
            <person name="Pierard A."/>
            <person name="Piravandi E."/>
            <person name="Pohl F.M."/>
            <person name="Pohl T.M."/>
            <person name="Potier S."/>
            <person name="Proft M."/>
            <person name="Purnelle B."/>
            <person name="Ramezani Rad M."/>
            <person name="Rieger M."/>
            <person name="Rose M."/>
            <person name="Schaaff-Gerstenschlaeger I."/>
            <person name="Scherens B."/>
            <person name="Schwarzlose C."/>
            <person name="Skala J."/>
            <person name="Slonimski P.P."/>
            <person name="Smits P.H.M."/>
            <person name="Souciet J.-L."/>
            <person name="Steensma H.Y."/>
            <person name="Stucka R."/>
            <person name="Urrestarazu L.A."/>
            <person name="van der Aart Q.J.M."/>
            <person name="Van Dyck L."/>
            <person name="Vassarotti A."/>
            <person name="Vetter I."/>
            <person name="Vierendeels F."/>
            <person name="Vissers S."/>
            <person name="Wagner G."/>
            <person name="de Wergifosse P."/>
            <person name="Wolfe K.H."/>
            <person name="Zagulski M."/>
            <person name="Zimmermann F.K."/>
            <person name="Mewes H.-W."/>
            <person name="Kleine K."/>
        </authorList>
    </citation>
    <scope>NUCLEOTIDE SEQUENCE [LARGE SCALE GENOMIC DNA]</scope>
    <source>
        <strain>ATCC 204508 / S288c</strain>
    </source>
</reference>
<reference key="3">
    <citation type="journal article" date="2014" name="G3 (Bethesda)">
        <title>The reference genome sequence of Saccharomyces cerevisiae: Then and now.</title>
        <authorList>
            <person name="Engel S.R."/>
            <person name="Dietrich F.S."/>
            <person name="Fisk D.G."/>
            <person name="Binkley G."/>
            <person name="Balakrishnan R."/>
            <person name="Costanzo M.C."/>
            <person name="Dwight S.S."/>
            <person name="Hitz B.C."/>
            <person name="Karra K."/>
            <person name="Nash R.S."/>
            <person name="Weng S."/>
            <person name="Wong E.D."/>
            <person name="Lloyd P."/>
            <person name="Skrzypek M.S."/>
            <person name="Miyasato S.R."/>
            <person name="Simison M."/>
            <person name="Cherry J.M."/>
        </authorList>
    </citation>
    <scope>GENOME REANNOTATION</scope>
    <source>
        <strain>ATCC 204508 / S288c</strain>
    </source>
</reference>
<reference key="4">
    <citation type="journal article" date="1999" name="Biochem. J.">
        <title>The role of Saccharomyces cerevisiae Met1p and Met8p in sirohaem and cobalamin biosynthesis.</title>
        <authorList>
            <person name="Raux E."/>
            <person name="McVeigh T."/>
            <person name="Peters S.E."/>
            <person name="Leustek T."/>
            <person name="Warren M.J."/>
        </authorList>
    </citation>
    <scope>FUNCTION</scope>
</reference>
<reference key="5">
    <citation type="journal article" date="2002" name="EMBO J.">
        <title>The structure of Saccharomyces cerevisiae Met8p, a bifunctional dehydrogenase and ferrochelatase.</title>
        <authorList>
            <person name="Schubert H.L."/>
            <person name="Raux E."/>
            <person name="Brindley A.A."/>
            <person name="Leech H.K."/>
            <person name="Wilson K.S."/>
            <person name="Hill C.P."/>
            <person name="Warren M.J."/>
        </authorList>
    </citation>
    <scope>X-RAY CRYSTALLOGRAPHY (2.2 ANGSTROMS) OF 11-274 IN COMPLEX WITH NAD</scope>
    <scope>SUBUNIT</scope>
    <scope>MUTAGENESIS OF GLY-22; ASP-141 AND HIS-237</scope>
    <scope>CATALYTIC ACTIVITY</scope>
</reference>
<dbReference type="EC" id="1.3.1.76" evidence="3"/>
<dbReference type="EC" id="4.99.1.4" evidence="3"/>
<dbReference type="EMBL" id="X17271">
    <property type="protein sequence ID" value="CAA35173.1"/>
    <property type="molecule type" value="Genomic_DNA"/>
</dbReference>
<dbReference type="EMBL" id="Z36082">
    <property type="protein sequence ID" value="CAA85177.1"/>
    <property type="molecule type" value="Genomic_DNA"/>
</dbReference>
<dbReference type="EMBL" id="BK006936">
    <property type="protein sequence ID" value="DAA07329.1"/>
    <property type="molecule type" value="Genomic_DNA"/>
</dbReference>
<dbReference type="PIR" id="S20155">
    <property type="entry name" value="S20155"/>
</dbReference>
<dbReference type="RefSeq" id="NP_009772.1">
    <property type="nucleotide sequence ID" value="NM_001178561.1"/>
</dbReference>
<dbReference type="PDB" id="1KYQ">
    <property type="method" value="X-ray"/>
    <property type="resolution" value="2.20 A"/>
    <property type="chains" value="A/B/C=1-274"/>
</dbReference>
<dbReference type="PDBsum" id="1KYQ"/>
<dbReference type="SMR" id="P15807"/>
<dbReference type="BioGRID" id="32910">
    <property type="interactions" value="113"/>
</dbReference>
<dbReference type="DIP" id="DIP-4944N"/>
<dbReference type="FunCoup" id="P15807">
    <property type="interactions" value="160"/>
</dbReference>
<dbReference type="IntAct" id="P15807">
    <property type="interactions" value="2"/>
</dbReference>
<dbReference type="MINT" id="P15807"/>
<dbReference type="STRING" id="4932.YBR213W"/>
<dbReference type="iPTMnet" id="P15807"/>
<dbReference type="PaxDb" id="4932-YBR213W"/>
<dbReference type="PeptideAtlas" id="P15807"/>
<dbReference type="EnsemblFungi" id="YBR213W_mRNA">
    <property type="protein sequence ID" value="YBR213W"/>
    <property type="gene ID" value="YBR213W"/>
</dbReference>
<dbReference type="GeneID" id="852514"/>
<dbReference type="KEGG" id="sce:YBR213W"/>
<dbReference type="AGR" id="SGD:S000000417"/>
<dbReference type="SGD" id="S000000417">
    <property type="gene designation" value="MET8"/>
</dbReference>
<dbReference type="VEuPathDB" id="FungiDB:YBR213W"/>
<dbReference type="eggNOG" id="ENOG502RYIW">
    <property type="taxonomic scope" value="Eukaryota"/>
</dbReference>
<dbReference type="HOGENOM" id="CLU_011276_8_5_1"/>
<dbReference type="InParanoid" id="P15807"/>
<dbReference type="OMA" id="PTGCKLT"/>
<dbReference type="OrthoDB" id="1721126at2759"/>
<dbReference type="BioCyc" id="MetaCyc:G3O-29150-MONOMER"/>
<dbReference type="BioCyc" id="YEAST:G3O-29150-MONOMER"/>
<dbReference type="BRENDA" id="1.3.1.76">
    <property type="organism ID" value="984"/>
</dbReference>
<dbReference type="BRENDA" id="4.99.1.4">
    <property type="organism ID" value="984"/>
</dbReference>
<dbReference type="UniPathway" id="UPA00262">
    <property type="reaction ID" value="UER00222"/>
</dbReference>
<dbReference type="UniPathway" id="UPA00262">
    <property type="reaction ID" value="UER00376"/>
</dbReference>
<dbReference type="BioGRID-ORCS" id="852514">
    <property type="hits" value="1 hit in 10 CRISPR screens"/>
</dbReference>
<dbReference type="EvolutionaryTrace" id="P15807"/>
<dbReference type="PRO" id="PR:P15807"/>
<dbReference type="Proteomes" id="UP000002311">
    <property type="component" value="Chromosome II"/>
</dbReference>
<dbReference type="RNAct" id="P15807">
    <property type="molecule type" value="protein"/>
</dbReference>
<dbReference type="GO" id="GO:0004325">
    <property type="term" value="F:ferrochelatase activity"/>
    <property type="evidence" value="ECO:0000314"/>
    <property type="project" value="SGD"/>
</dbReference>
<dbReference type="GO" id="GO:0043115">
    <property type="term" value="F:precorrin-2 dehydrogenase activity"/>
    <property type="evidence" value="ECO:0000314"/>
    <property type="project" value="SGD"/>
</dbReference>
<dbReference type="GO" id="GO:0051266">
    <property type="term" value="F:sirohydrochlorin ferrochelatase activity"/>
    <property type="evidence" value="ECO:0007669"/>
    <property type="project" value="UniProtKB-EC"/>
</dbReference>
<dbReference type="GO" id="GO:0019354">
    <property type="term" value="P:siroheme biosynthetic process"/>
    <property type="evidence" value="ECO:0000315"/>
    <property type="project" value="SGD"/>
</dbReference>
<dbReference type="GO" id="GO:0000103">
    <property type="term" value="P:sulfate assimilation"/>
    <property type="evidence" value="ECO:0000315"/>
    <property type="project" value="SGD"/>
</dbReference>
<dbReference type="Gene3D" id="3.40.50.720">
    <property type="entry name" value="NAD(P)-binding Rossmann-like Domain"/>
    <property type="match status" value="1"/>
</dbReference>
<dbReference type="Gene3D" id="3.30.160.110">
    <property type="entry name" value="Siroheme synthase, domain 2"/>
    <property type="match status" value="1"/>
</dbReference>
<dbReference type="Gene3D" id="1.10.3280.10">
    <property type="entry name" value="Siroheme synthase, domain 3"/>
    <property type="match status" value="1"/>
</dbReference>
<dbReference type="InterPro" id="IPR028161">
    <property type="entry name" value="Met8-like"/>
</dbReference>
<dbReference type="InterPro" id="IPR028162">
    <property type="entry name" value="Met8_C"/>
</dbReference>
<dbReference type="InterPro" id="IPR036291">
    <property type="entry name" value="NAD(P)-bd_dom_sf"/>
</dbReference>
<dbReference type="InterPro" id="IPR028281">
    <property type="entry name" value="Sirohaem_synthase_central"/>
</dbReference>
<dbReference type="PANTHER" id="PTHR35330">
    <property type="entry name" value="SIROHEME BIOSYNTHESIS PROTEIN MET8"/>
    <property type="match status" value="1"/>
</dbReference>
<dbReference type="PANTHER" id="PTHR35330:SF1">
    <property type="entry name" value="SIROHEME BIOSYNTHESIS PROTEIN MET8"/>
    <property type="match status" value="1"/>
</dbReference>
<dbReference type="Pfam" id="PF13241">
    <property type="entry name" value="NAD_binding_7"/>
    <property type="match status" value="1"/>
</dbReference>
<dbReference type="Pfam" id="PF14823">
    <property type="entry name" value="Sirohm_synth_C"/>
    <property type="match status" value="1"/>
</dbReference>
<dbReference type="Pfam" id="PF14824">
    <property type="entry name" value="Sirohm_synth_M"/>
    <property type="match status" value="1"/>
</dbReference>
<dbReference type="SUPFAM" id="SSF51735">
    <property type="entry name" value="NAD(P)-binding Rossmann-fold domains"/>
    <property type="match status" value="1"/>
</dbReference>
<dbReference type="SUPFAM" id="SSF75615">
    <property type="entry name" value="Siroheme synthase middle domains-like"/>
    <property type="match status" value="1"/>
</dbReference>
<sequence length="274" mass="31918">MVKSLQLAHQLKDKKILLIGGGEVGLTRLYKLIPTGCKLTLVSPDLHKSIIPKFGKFIQNEDQPDYREDAKRFINPNWDPTKNEIYEYIRSDFKDEYLDLEDENDAWYIIMTCIPDHPESARIYHLCKERFGKQQLVNVADKPDLCDFYFGANLEIGDRLQILISTNGLSPRFGALVRDEIRNLFTQMGDLALEDAVVKLGELRRGIRLLAPDDKDVKYRMDWARRCTDLFGIQHCHNIDVKRLLDLFKVMFQEQNCSLQFPPRERLLSEYCSS</sequence>
<keyword id="KW-0002">3D-structure</keyword>
<keyword id="KW-0456">Lyase</keyword>
<keyword id="KW-0511">Multifunctional enzyme</keyword>
<keyword id="KW-0520">NAD</keyword>
<keyword id="KW-0560">Oxidoreductase</keyword>
<keyword id="KW-0627">Porphyrin biosynthesis</keyword>
<keyword id="KW-1185">Reference proteome</keyword>
<accession>P15807</accession>
<accession>D6VQK9</accession>
<gene>
    <name evidence="6" type="primary">MET8</name>
    <name type="ordered locus">YBR213W</name>
    <name type="ORF">YBR1461</name>
</gene>
<comment type="function">
    <text evidence="2">Catalyzes the conversion of precorrin-2 into siroheme. This reaction consist of the NAD-dependent oxidation of precorrin-2 into sirohydrochlorin and its subsequent ferrochelation into siroheme.</text>
</comment>
<comment type="catalytic activity">
    <reaction evidence="3">
        <text>precorrin-2 + NAD(+) = sirohydrochlorin + NADH + 2 H(+)</text>
        <dbReference type="Rhea" id="RHEA:15613"/>
        <dbReference type="ChEBI" id="CHEBI:15378"/>
        <dbReference type="ChEBI" id="CHEBI:57540"/>
        <dbReference type="ChEBI" id="CHEBI:57945"/>
        <dbReference type="ChEBI" id="CHEBI:58351"/>
        <dbReference type="ChEBI" id="CHEBI:58827"/>
        <dbReference type="EC" id="1.3.1.76"/>
    </reaction>
    <physiologicalReaction direction="left-to-right" evidence="3">
        <dbReference type="Rhea" id="RHEA:15614"/>
    </physiologicalReaction>
</comment>
<comment type="catalytic activity">
    <reaction evidence="3">
        <text>siroheme + 2 H(+) = sirohydrochlorin + Fe(2+)</text>
        <dbReference type="Rhea" id="RHEA:24360"/>
        <dbReference type="ChEBI" id="CHEBI:15378"/>
        <dbReference type="ChEBI" id="CHEBI:29033"/>
        <dbReference type="ChEBI" id="CHEBI:58351"/>
        <dbReference type="ChEBI" id="CHEBI:60052"/>
        <dbReference type="EC" id="4.99.1.4"/>
    </reaction>
    <physiologicalReaction direction="left-to-right" evidence="3">
        <dbReference type="Rhea" id="RHEA:24361"/>
    </physiologicalReaction>
</comment>
<comment type="pathway">
    <text>Porphyrin-containing compound metabolism; siroheme biosynthesis; siroheme from sirohydrochlorin: step 1/1.</text>
</comment>
<comment type="pathway">
    <text>Porphyrin-containing compound metabolism; siroheme biosynthesis; sirohydrochlorin from precorrin-2: step 1/1.</text>
</comment>
<comment type="subunit">
    <text evidence="3">Homodimer.</text>
</comment>
<comment type="similarity">
    <text evidence="7">Belongs to the precorrin-2 dehydrogenase / sirohydrochlorin ferrochelatase family. MET8 subfamily.</text>
</comment>